<feature type="chain" id="PRO_0000336876" description="UDP-N-acetylmuramate--L-alanine ligase">
    <location>
        <begin position="1"/>
        <end position="477"/>
    </location>
</feature>
<feature type="binding site" evidence="1">
    <location>
        <begin position="122"/>
        <end position="128"/>
    </location>
    <ligand>
        <name>ATP</name>
        <dbReference type="ChEBI" id="CHEBI:30616"/>
    </ligand>
</feature>
<organism>
    <name type="scientific">Xanthomonas campestris pv. campestris (strain B100)</name>
    <dbReference type="NCBI Taxonomy" id="509169"/>
    <lineage>
        <taxon>Bacteria</taxon>
        <taxon>Pseudomonadati</taxon>
        <taxon>Pseudomonadota</taxon>
        <taxon>Gammaproteobacteria</taxon>
        <taxon>Lysobacterales</taxon>
        <taxon>Lysobacteraceae</taxon>
        <taxon>Xanthomonas</taxon>
    </lineage>
</organism>
<sequence length="477" mass="50525">MIRRLQDSGDLVRAFPRVHFVGIGGTGMSGIAEVMLTLGYEVSGSDNADNAATRRLAKLGARVMRGHSAANVLGTDCVVVSSAIREDNPELMEARSQRIPIMPRAAMLAELMRFRRGIAVAGTHGKTTTTSLAAAVLSEGGLDPTFVIGGQLLAAGANAKLGGGQWLVAEADESDGSFLRLNPLMAVITNIDADHLENYGNDFARVQAAFAEFLQRLPFYGLALLCIDDPEVAALAGKTPRHVMSYGMSENADVRAEDVVQDGPRMRFTLRLPEGTTTPVTLALPGRHNVLNALAAAAIGWQLGVAPDTIARALENFAGIGRRFNDLGEVTTASGARVRVVDDYGHHPRELEAVFAAARGGWPDKRLVVAFQPHRYSRTRDQFDAFAAVLSTVDALVLSEVYPAGEAPIPGADSRALARAIRARGRSEPVVVGQVAGLSEVLPDVLQDGDLLLMMGAGDIGYVAQQIVTDGFVGAPA</sequence>
<comment type="function">
    <text evidence="1">Cell wall formation.</text>
</comment>
<comment type="catalytic activity">
    <reaction evidence="1">
        <text>UDP-N-acetyl-alpha-D-muramate + L-alanine + ATP = UDP-N-acetyl-alpha-D-muramoyl-L-alanine + ADP + phosphate + H(+)</text>
        <dbReference type="Rhea" id="RHEA:23372"/>
        <dbReference type="ChEBI" id="CHEBI:15378"/>
        <dbReference type="ChEBI" id="CHEBI:30616"/>
        <dbReference type="ChEBI" id="CHEBI:43474"/>
        <dbReference type="ChEBI" id="CHEBI:57972"/>
        <dbReference type="ChEBI" id="CHEBI:70757"/>
        <dbReference type="ChEBI" id="CHEBI:83898"/>
        <dbReference type="ChEBI" id="CHEBI:456216"/>
        <dbReference type="EC" id="6.3.2.8"/>
    </reaction>
</comment>
<comment type="pathway">
    <text evidence="1">Cell wall biogenesis; peptidoglycan biosynthesis.</text>
</comment>
<comment type="subcellular location">
    <subcellularLocation>
        <location evidence="1">Cytoplasm</location>
    </subcellularLocation>
</comment>
<comment type="similarity">
    <text evidence="1">Belongs to the MurCDEF family.</text>
</comment>
<protein>
    <recommendedName>
        <fullName evidence="1">UDP-N-acetylmuramate--L-alanine ligase</fullName>
        <ecNumber evidence="1">6.3.2.8</ecNumber>
    </recommendedName>
    <alternativeName>
        <fullName evidence="1">UDP-N-acetylmuramoyl-L-alanine synthetase</fullName>
    </alternativeName>
</protein>
<evidence type="ECO:0000255" key="1">
    <source>
        <dbReference type="HAMAP-Rule" id="MF_00046"/>
    </source>
</evidence>
<name>MURC_XANCB</name>
<accession>B0RVA4</accession>
<gene>
    <name evidence="1" type="primary">murC</name>
    <name type="ordered locus">xcc-b100_3630</name>
</gene>
<keyword id="KW-0067">ATP-binding</keyword>
<keyword id="KW-0131">Cell cycle</keyword>
<keyword id="KW-0132">Cell division</keyword>
<keyword id="KW-0133">Cell shape</keyword>
<keyword id="KW-0961">Cell wall biogenesis/degradation</keyword>
<keyword id="KW-0963">Cytoplasm</keyword>
<keyword id="KW-0436">Ligase</keyword>
<keyword id="KW-0547">Nucleotide-binding</keyword>
<keyword id="KW-0573">Peptidoglycan synthesis</keyword>
<proteinExistence type="inferred from homology"/>
<dbReference type="EC" id="6.3.2.8" evidence="1"/>
<dbReference type="EMBL" id="AM920689">
    <property type="protein sequence ID" value="CAP52995.1"/>
    <property type="molecule type" value="Genomic_DNA"/>
</dbReference>
<dbReference type="SMR" id="B0RVA4"/>
<dbReference type="KEGG" id="xca:xcc-b100_3630"/>
<dbReference type="HOGENOM" id="CLU_028104_2_2_6"/>
<dbReference type="UniPathway" id="UPA00219"/>
<dbReference type="Proteomes" id="UP000001188">
    <property type="component" value="Chromosome"/>
</dbReference>
<dbReference type="GO" id="GO:0005737">
    <property type="term" value="C:cytoplasm"/>
    <property type="evidence" value="ECO:0007669"/>
    <property type="project" value="UniProtKB-SubCell"/>
</dbReference>
<dbReference type="GO" id="GO:0005524">
    <property type="term" value="F:ATP binding"/>
    <property type="evidence" value="ECO:0007669"/>
    <property type="project" value="UniProtKB-UniRule"/>
</dbReference>
<dbReference type="GO" id="GO:0008763">
    <property type="term" value="F:UDP-N-acetylmuramate-L-alanine ligase activity"/>
    <property type="evidence" value="ECO:0007669"/>
    <property type="project" value="UniProtKB-UniRule"/>
</dbReference>
<dbReference type="GO" id="GO:0051301">
    <property type="term" value="P:cell division"/>
    <property type="evidence" value="ECO:0007669"/>
    <property type="project" value="UniProtKB-KW"/>
</dbReference>
<dbReference type="GO" id="GO:0071555">
    <property type="term" value="P:cell wall organization"/>
    <property type="evidence" value="ECO:0007669"/>
    <property type="project" value="UniProtKB-KW"/>
</dbReference>
<dbReference type="GO" id="GO:0009252">
    <property type="term" value="P:peptidoglycan biosynthetic process"/>
    <property type="evidence" value="ECO:0007669"/>
    <property type="project" value="UniProtKB-UniRule"/>
</dbReference>
<dbReference type="GO" id="GO:0008360">
    <property type="term" value="P:regulation of cell shape"/>
    <property type="evidence" value="ECO:0007669"/>
    <property type="project" value="UniProtKB-KW"/>
</dbReference>
<dbReference type="Gene3D" id="3.90.190.20">
    <property type="entry name" value="Mur ligase, C-terminal domain"/>
    <property type="match status" value="1"/>
</dbReference>
<dbReference type="Gene3D" id="3.40.1190.10">
    <property type="entry name" value="Mur-like, catalytic domain"/>
    <property type="match status" value="1"/>
</dbReference>
<dbReference type="Gene3D" id="3.40.50.720">
    <property type="entry name" value="NAD(P)-binding Rossmann-like Domain"/>
    <property type="match status" value="1"/>
</dbReference>
<dbReference type="HAMAP" id="MF_00046">
    <property type="entry name" value="MurC"/>
    <property type="match status" value="1"/>
</dbReference>
<dbReference type="InterPro" id="IPR036565">
    <property type="entry name" value="Mur-like_cat_sf"/>
</dbReference>
<dbReference type="InterPro" id="IPR004101">
    <property type="entry name" value="Mur_ligase_C"/>
</dbReference>
<dbReference type="InterPro" id="IPR036615">
    <property type="entry name" value="Mur_ligase_C_dom_sf"/>
</dbReference>
<dbReference type="InterPro" id="IPR013221">
    <property type="entry name" value="Mur_ligase_cen"/>
</dbReference>
<dbReference type="InterPro" id="IPR000713">
    <property type="entry name" value="Mur_ligase_N"/>
</dbReference>
<dbReference type="InterPro" id="IPR050061">
    <property type="entry name" value="MurCDEF_pg_biosynth"/>
</dbReference>
<dbReference type="InterPro" id="IPR005758">
    <property type="entry name" value="UDP-N-AcMur_Ala_ligase_MurC"/>
</dbReference>
<dbReference type="NCBIfam" id="TIGR01082">
    <property type="entry name" value="murC"/>
    <property type="match status" value="1"/>
</dbReference>
<dbReference type="PANTHER" id="PTHR43445:SF3">
    <property type="entry name" value="UDP-N-ACETYLMURAMATE--L-ALANINE LIGASE"/>
    <property type="match status" value="1"/>
</dbReference>
<dbReference type="PANTHER" id="PTHR43445">
    <property type="entry name" value="UDP-N-ACETYLMURAMATE--L-ALANINE LIGASE-RELATED"/>
    <property type="match status" value="1"/>
</dbReference>
<dbReference type="Pfam" id="PF01225">
    <property type="entry name" value="Mur_ligase"/>
    <property type="match status" value="1"/>
</dbReference>
<dbReference type="Pfam" id="PF02875">
    <property type="entry name" value="Mur_ligase_C"/>
    <property type="match status" value="1"/>
</dbReference>
<dbReference type="Pfam" id="PF08245">
    <property type="entry name" value="Mur_ligase_M"/>
    <property type="match status" value="1"/>
</dbReference>
<dbReference type="SUPFAM" id="SSF51984">
    <property type="entry name" value="MurCD N-terminal domain"/>
    <property type="match status" value="1"/>
</dbReference>
<dbReference type="SUPFAM" id="SSF53623">
    <property type="entry name" value="MurD-like peptide ligases, catalytic domain"/>
    <property type="match status" value="1"/>
</dbReference>
<dbReference type="SUPFAM" id="SSF53244">
    <property type="entry name" value="MurD-like peptide ligases, peptide-binding domain"/>
    <property type="match status" value="1"/>
</dbReference>
<reference key="1">
    <citation type="journal article" date="2008" name="J. Biotechnol.">
        <title>The genome of Xanthomonas campestris pv. campestris B100 and its use for the reconstruction of metabolic pathways involved in xanthan biosynthesis.</title>
        <authorList>
            <person name="Vorhoelter F.-J."/>
            <person name="Schneiker S."/>
            <person name="Goesmann A."/>
            <person name="Krause L."/>
            <person name="Bekel T."/>
            <person name="Kaiser O."/>
            <person name="Linke B."/>
            <person name="Patschkowski T."/>
            <person name="Rueckert C."/>
            <person name="Schmid J."/>
            <person name="Sidhu V.K."/>
            <person name="Sieber V."/>
            <person name="Tauch A."/>
            <person name="Watt S.A."/>
            <person name="Weisshaar B."/>
            <person name="Becker A."/>
            <person name="Niehaus K."/>
            <person name="Puehler A."/>
        </authorList>
    </citation>
    <scope>NUCLEOTIDE SEQUENCE [LARGE SCALE GENOMIC DNA]</scope>
    <source>
        <strain>B100</strain>
    </source>
</reference>